<keyword id="KW-1185">Reference proteome</keyword>
<keyword id="KW-0808">Transferase</keyword>
<name>Y1051_METJA</name>
<evidence type="ECO:0000305" key="1"/>
<organism>
    <name type="scientific">Methanocaldococcus jannaschii (strain ATCC 43067 / DSM 2661 / JAL-1 / JCM 10045 / NBRC 100440)</name>
    <name type="common">Methanococcus jannaschii</name>
    <dbReference type="NCBI Taxonomy" id="243232"/>
    <lineage>
        <taxon>Archaea</taxon>
        <taxon>Methanobacteriati</taxon>
        <taxon>Methanobacteriota</taxon>
        <taxon>Methanomada group</taxon>
        <taxon>Methanococci</taxon>
        <taxon>Methanococcales</taxon>
        <taxon>Methanocaldococcaceae</taxon>
        <taxon>Methanocaldococcus</taxon>
    </lineage>
</organism>
<gene>
    <name type="ordered locus">MJ1051</name>
</gene>
<protein>
    <recommendedName>
        <fullName>Uncharacterized protein MJ1051</fullName>
    </recommendedName>
</protein>
<comment type="similarity">
    <text evidence="1">Belongs to the NodU/CmcH family.</text>
</comment>
<feature type="chain" id="PRO_0000207857" description="Uncharacterized protein MJ1051">
    <location>
        <begin position="1"/>
        <end position="513"/>
    </location>
</feature>
<proteinExistence type="inferred from homology"/>
<sequence>MILGICDGHNASSSLIKRDEILFAMSEERFTRKKNQRGFPEKSVDYILNKVKPDEINYVSVGGVFRRGERIKKLKEFQNRINKKFLYFYHHISHSYLFKLSDFKEALVISIDGGGDGLSFLASIANKNNLEIIAQSDLIDSVGDFYASITELLGFKPMEDEGKVMSLSSYEGEDDINLTTIDYIKELKSFKNYLGVIGYEATKALKKLIVSDKSQLSFEDKVRISKFAQRTLENIVLKAIDDLSNEYNIDNIVFVGGVAQNVKLNSKIAEKYNLFVPPFMGDEGLCLGASLADKRIDRININNTYFGYEIENERAEKILEELKNKLNDYKIEFVEERDIPEVIGNLILDNKVVCLSRGKMEFGPRALGNRSVIALPTKENKEKINKKLKRSWFMPFAPTILYDFIDDYLINPRYSPFMTQIFKVKENKIKEIEGVIHVDKTTRPQTLKKDSNKTFYGIIRYIYDSIGIPVVLNTSFNLHGEPIVCNEKDAINSFLKADFDALLLGNYLISKVK</sequence>
<dbReference type="EMBL" id="L77117">
    <property type="protein sequence ID" value="AAB99054.1"/>
    <property type="molecule type" value="Genomic_DNA"/>
</dbReference>
<dbReference type="PIR" id="B64431">
    <property type="entry name" value="B64431"/>
</dbReference>
<dbReference type="RefSeq" id="WP_010870564.1">
    <property type="nucleotide sequence ID" value="NC_000909.1"/>
</dbReference>
<dbReference type="SMR" id="Q58451"/>
<dbReference type="STRING" id="243232.MJ_1051"/>
<dbReference type="PaxDb" id="243232-MJ_1051"/>
<dbReference type="EnsemblBacteria" id="AAB99054">
    <property type="protein sequence ID" value="AAB99054"/>
    <property type="gene ID" value="MJ_1051"/>
</dbReference>
<dbReference type="GeneID" id="1451948"/>
<dbReference type="KEGG" id="mja:MJ_1051"/>
<dbReference type="eggNOG" id="arCOG01188">
    <property type="taxonomic scope" value="Archaea"/>
</dbReference>
<dbReference type="HOGENOM" id="CLU_014411_2_0_2"/>
<dbReference type="InParanoid" id="Q58451"/>
<dbReference type="OrthoDB" id="42122at2157"/>
<dbReference type="PhylomeDB" id="Q58451"/>
<dbReference type="Proteomes" id="UP000000805">
    <property type="component" value="Chromosome"/>
</dbReference>
<dbReference type="GO" id="GO:0016740">
    <property type="term" value="F:transferase activity"/>
    <property type="evidence" value="ECO:0007669"/>
    <property type="project" value="UniProtKB-KW"/>
</dbReference>
<dbReference type="GO" id="GO:0009058">
    <property type="term" value="P:biosynthetic process"/>
    <property type="evidence" value="ECO:0007669"/>
    <property type="project" value="InterPro"/>
</dbReference>
<dbReference type="CDD" id="cd24100">
    <property type="entry name" value="ASKHA_NBD_MJ1051-like_N"/>
    <property type="match status" value="1"/>
</dbReference>
<dbReference type="Gene3D" id="3.30.420.40">
    <property type="match status" value="2"/>
</dbReference>
<dbReference type="Gene3D" id="3.90.870.20">
    <property type="entry name" value="Carbamoyltransferase, C-terminal domain"/>
    <property type="match status" value="1"/>
</dbReference>
<dbReference type="InterPro" id="IPR043129">
    <property type="entry name" value="ATPase_NBD"/>
</dbReference>
<dbReference type="InterPro" id="IPR031730">
    <property type="entry name" value="Carbam_trans_C"/>
</dbReference>
<dbReference type="InterPro" id="IPR038152">
    <property type="entry name" value="Carbam_trans_C_sf"/>
</dbReference>
<dbReference type="InterPro" id="IPR003696">
    <property type="entry name" value="Carbtransf_dom"/>
</dbReference>
<dbReference type="InterPro" id="IPR051338">
    <property type="entry name" value="NodU/CmcH_Carbamoyltrnsfr"/>
</dbReference>
<dbReference type="PANTHER" id="PTHR34847">
    <property type="entry name" value="NODULATION PROTEIN U"/>
    <property type="match status" value="1"/>
</dbReference>
<dbReference type="PANTHER" id="PTHR34847:SF1">
    <property type="entry name" value="NODULATION PROTEIN U"/>
    <property type="match status" value="1"/>
</dbReference>
<dbReference type="Pfam" id="PF16861">
    <property type="entry name" value="Carbam_trans_C"/>
    <property type="match status" value="1"/>
</dbReference>
<dbReference type="Pfam" id="PF02543">
    <property type="entry name" value="Carbam_trans_N"/>
    <property type="match status" value="1"/>
</dbReference>
<dbReference type="SUPFAM" id="SSF53067">
    <property type="entry name" value="Actin-like ATPase domain"/>
    <property type="match status" value="1"/>
</dbReference>
<accession>Q58451</accession>
<reference key="1">
    <citation type="journal article" date="1996" name="Science">
        <title>Complete genome sequence of the methanogenic archaeon, Methanococcus jannaschii.</title>
        <authorList>
            <person name="Bult C.J."/>
            <person name="White O."/>
            <person name="Olsen G.J."/>
            <person name="Zhou L."/>
            <person name="Fleischmann R.D."/>
            <person name="Sutton G.G."/>
            <person name="Blake J.A."/>
            <person name="FitzGerald L.M."/>
            <person name="Clayton R.A."/>
            <person name="Gocayne J.D."/>
            <person name="Kerlavage A.R."/>
            <person name="Dougherty B.A."/>
            <person name="Tomb J.-F."/>
            <person name="Adams M.D."/>
            <person name="Reich C.I."/>
            <person name="Overbeek R."/>
            <person name="Kirkness E.F."/>
            <person name="Weinstock K.G."/>
            <person name="Merrick J.M."/>
            <person name="Glodek A."/>
            <person name="Scott J.L."/>
            <person name="Geoghagen N.S.M."/>
            <person name="Weidman J.F."/>
            <person name="Fuhrmann J.L."/>
            <person name="Nguyen D."/>
            <person name="Utterback T.R."/>
            <person name="Kelley J.M."/>
            <person name="Peterson J.D."/>
            <person name="Sadow P.W."/>
            <person name="Hanna M.C."/>
            <person name="Cotton M.D."/>
            <person name="Roberts K.M."/>
            <person name="Hurst M.A."/>
            <person name="Kaine B.P."/>
            <person name="Borodovsky M."/>
            <person name="Klenk H.-P."/>
            <person name="Fraser C.M."/>
            <person name="Smith H.O."/>
            <person name="Woese C.R."/>
            <person name="Venter J.C."/>
        </authorList>
    </citation>
    <scope>NUCLEOTIDE SEQUENCE [LARGE SCALE GENOMIC DNA]</scope>
    <source>
        <strain>ATCC 43067 / DSM 2661 / JAL-1 / JCM 10045 / NBRC 100440</strain>
    </source>
</reference>